<comment type="function">
    <text evidence="1">Together with its co-chaperonin GroES, plays an essential role in assisting protein folding. The GroEL-GroES system forms a nano-cage that allows encapsulation of the non-native substrate proteins and provides a physical environment optimized to promote and accelerate protein folding.</text>
</comment>
<comment type="catalytic activity">
    <reaction evidence="1">
        <text>ATP + H2O + a folded polypeptide = ADP + phosphate + an unfolded polypeptide.</text>
        <dbReference type="EC" id="5.6.1.7"/>
    </reaction>
</comment>
<comment type="subunit">
    <text evidence="1">Forms a cylinder of 14 subunits composed of two heptameric rings stacked back-to-back. Interacts with the co-chaperonin GroES.</text>
</comment>
<comment type="subcellular location">
    <subcellularLocation>
        <location evidence="1">Cytoplasm</location>
    </subcellularLocation>
</comment>
<comment type="similarity">
    <text evidence="1">Belongs to the chaperonin (HSP60) family.</text>
</comment>
<protein>
    <recommendedName>
        <fullName evidence="1">Chaperonin GroEL 2</fullName>
        <ecNumber evidence="1">5.6.1.7</ecNumber>
    </recommendedName>
    <alternativeName>
        <fullName evidence="1">60 kDa chaperonin 2</fullName>
    </alternativeName>
    <alternativeName>
        <fullName evidence="1">Chaperonin-60 2</fullName>
        <shortName evidence="1">Cpn60 2</shortName>
    </alternativeName>
</protein>
<sequence>MASKEIIFDQKARDAILKGVNTLADAVKVTLGPKGRNVVIEKSFGSPTITKDGVTVAKEIELENKFENMGAQMVKEVASKTSDVAGDGTTTATVLAQALYREGSKLVAAGHNPMEIKRGIDKAVEIIVGELKKLSKPTKDQKEIAQVGIISANGDETIGNIIAEAMEKVGKEGVITVEEAKGLETTLEVVEGMQFDRGYLSPYFVTDAERMVANLEDAYILIHEKKISNMKDLLPLLEQIARSGKPLLIVAEEVEGEALATLVVNKLRGTLHVAAVKAPGFGDRRKAMLEDIAILTGGRMIAEELGLKLEQVSLKDLGRAKRISIDKDNTTIVDGAGQKADIEARVKTIRAQIEETTSDYDREKLQERLAKLVGGVAVINVGAATETEMKEKKARVEDALHATRAAVEEGIVPGGGVAYLRAVKALEGVKVSEGEKFGLDIVRRALEEPLRQIAGNGGYEASIVVNKVKESKDTNFGFNAATGDYEDLVKSGVIDPTKVSRSALQNASSVASLMLTTMALVAEKPKEESAAPAGGGMGGMGGMGGMM</sequence>
<accession>A7HGP8</accession>
<reference key="1">
    <citation type="journal article" date="2015" name="Genome Announc.">
        <title>Complete genome sequence of Anaeromyxobacter sp. Fw109-5, an anaerobic, metal-reducing bacterium isolated from a contaminated subsurface environment.</title>
        <authorList>
            <person name="Hwang C."/>
            <person name="Copeland A."/>
            <person name="Lucas S."/>
            <person name="Lapidus A."/>
            <person name="Barry K."/>
            <person name="Glavina Del Rio T."/>
            <person name="Dalin E."/>
            <person name="Tice H."/>
            <person name="Pitluck S."/>
            <person name="Sims D."/>
            <person name="Brettin T."/>
            <person name="Bruce D.C."/>
            <person name="Detter J.C."/>
            <person name="Han C.S."/>
            <person name="Schmutz J."/>
            <person name="Larimer F.W."/>
            <person name="Land M.L."/>
            <person name="Hauser L.J."/>
            <person name="Kyrpides N."/>
            <person name="Lykidis A."/>
            <person name="Richardson P."/>
            <person name="Belieav A."/>
            <person name="Sanford R.A."/>
            <person name="Loeffler F.E."/>
            <person name="Fields M.W."/>
        </authorList>
    </citation>
    <scope>NUCLEOTIDE SEQUENCE [LARGE SCALE GENOMIC DNA]</scope>
    <source>
        <strain>Fw109-5</strain>
    </source>
</reference>
<gene>
    <name evidence="1" type="primary">groEL2</name>
    <name evidence="1" type="synonym">groL2</name>
    <name type="ordered locus">Anae109_3715</name>
</gene>
<dbReference type="EC" id="5.6.1.7" evidence="1"/>
<dbReference type="EMBL" id="CP000769">
    <property type="protein sequence ID" value="ABS27894.1"/>
    <property type="molecule type" value="Genomic_DNA"/>
</dbReference>
<dbReference type="RefSeq" id="WP_012098521.1">
    <property type="nucleotide sequence ID" value="NC_009675.1"/>
</dbReference>
<dbReference type="SMR" id="A7HGP8"/>
<dbReference type="STRING" id="404589.Anae109_3715"/>
<dbReference type="KEGG" id="afw:Anae109_3715"/>
<dbReference type="eggNOG" id="COG0459">
    <property type="taxonomic scope" value="Bacteria"/>
</dbReference>
<dbReference type="HOGENOM" id="CLU_016503_3_0_7"/>
<dbReference type="OrthoDB" id="9766614at2"/>
<dbReference type="Proteomes" id="UP000006382">
    <property type="component" value="Chromosome"/>
</dbReference>
<dbReference type="GO" id="GO:0005737">
    <property type="term" value="C:cytoplasm"/>
    <property type="evidence" value="ECO:0007669"/>
    <property type="project" value="UniProtKB-SubCell"/>
</dbReference>
<dbReference type="GO" id="GO:0005524">
    <property type="term" value="F:ATP binding"/>
    <property type="evidence" value="ECO:0007669"/>
    <property type="project" value="UniProtKB-UniRule"/>
</dbReference>
<dbReference type="GO" id="GO:0140662">
    <property type="term" value="F:ATP-dependent protein folding chaperone"/>
    <property type="evidence" value="ECO:0007669"/>
    <property type="project" value="InterPro"/>
</dbReference>
<dbReference type="GO" id="GO:0016853">
    <property type="term" value="F:isomerase activity"/>
    <property type="evidence" value="ECO:0007669"/>
    <property type="project" value="UniProtKB-KW"/>
</dbReference>
<dbReference type="GO" id="GO:0051082">
    <property type="term" value="F:unfolded protein binding"/>
    <property type="evidence" value="ECO:0007669"/>
    <property type="project" value="UniProtKB-UniRule"/>
</dbReference>
<dbReference type="GO" id="GO:0042026">
    <property type="term" value="P:protein refolding"/>
    <property type="evidence" value="ECO:0007669"/>
    <property type="project" value="UniProtKB-UniRule"/>
</dbReference>
<dbReference type="CDD" id="cd03344">
    <property type="entry name" value="GroEL"/>
    <property type="match status" value="1"/>
</dbReference>
<dbReference type="FunFam" id="1.10.560.10:FF:000001">
    <property type="entry name" value="60 kDa chaperonin"/>
    <property type="match status" value="1"/>
</dbReference>
<dbReference type="FunFam" id="3.50.7.10:FF:000001">
    <property type="entry name" value="60 kDa chaperonin"/>
    <property type="match status" value="1"/>
</dbReference>
<dbReference type="Gene3D" id="3.50.7.10">
    <property type="entry name" value="GroEL"/>
    <property type="match status" value="1"/>
</dbReference>
<dbReference type="Gene3D" id="1.10.560.10">
    <property type="entry name" value="GroEL-like equatorial domain"/>
    <property type="match status" value="1"/>
</dbReference>
<dbReference type="Gene3D" id="3.30.260.10">
    <property type="entry name" value="TCP-1-like chaperonin intermediate domain"/>
    <property type="match status" value="1"/>
</dbReference>
<dbReference type="HAMAP" id="MF_00600">
    <property type="entry name" value="CH60"/>
    <property type="match status" value="1"/>
</dbReference>
<dbReference type="InterPro" id="IPR018370">
    <property type="entry name" value="Chaperonin_Cpn60_CS"/>
</dbReference>
<dbReference type="InterPro" id="IPR001844">
    <property type="entry name" value="Cpn60/GroEL"/>
</dbReference>
<dbReference type="InterPro" id="IPR002423">
    <property type="entry name" value="Cpn60/GroEL/TCP-1"/>
</dbReference>
<dbReference type="InterPro" id="IPR027409">
    <property type="entry name" value="GroEL-like_apical_dom_sf"/>
</dbReference>
<dbReference type="InterPro" id="IPR027413">
    <property type="entry name" value="GROEL-like_equatorial_sf"/>
</dbReference>
<dbReference type="InterPro" id="IPR027410">
    <property type="entry name" value="TCP-1-like_intermed_sf"/>
</dbReference>
<dbReference type="NCBIfam" id="TIGR02348">
    <property type="entry name" value="GroEL"/>
    <property type="match status" value="1"/>
</dbReference>
<dbReference type="NCBIfam" id="NF000592">
    <property type="entry name" value="PRK00013.1"/>
    <property type="match status" value="1"/>
</dbReference>
<dbReference type="NCBIfam" id="NF009487">
    <property type="entry name" value="PRK12849.1"/>
    <property type="match status" value="1"/>
</dbReference>
<dbReference type="NCBIfam" id="NF009488">
    <property type="entry name" value="PRK12850.1"/>
    <property type="match status" value="1"/>
</dbReference>
<dbReference type="NCBIfam" id="NF009489">
    <property type="entry name" value="PRK12851.1"/>
    <property type="match status" value="1"/>
</dbReference>
<dbReference type="PANTHER" id="PTHR45633">
    <property type="entry name" value="60 KDA HEAT SHOCK PROTEIN, MITOCHONDRIAL"/>
    <property type="match status" value="1"/>
</dbReference>
<dbReference type="Pfam" id="PF00118">
    <property type="entry name" value="Cpn60_TCP1"/>
    <property type="match status" value="1"/>
</dbReference>
<dbReference type="PRINTS" id="PR00298">
    <property type="entry name" value="CHAPERONIN60"/>
</dbReference>
<dbReference type="SUPFAM" id="SSF52029">
    <property type="entry name" value="GroEL apical domain-like"/>
    <property type="match status" value="1"/>
</dbReference>
<dbReference type="SUPFAM" id="SSF48592">
    <property type="entry name" value="GroEL equatorial domain-like"/>
    <property type="match status" value="1"/>
</dbReference>
<dbReference type="SUPFAM" id="SSF54849">
    <property type="entry name" value="GroEL-intermediate domain like"/>
    <property type="match status" value="1"/>
</dbReference>
<dbReference type="PROSITE" id="PS00296">
    <property type="entry name" value="CHAPERONINS_CPN60"/>
    <property type="match status" value="1"/>
</dbReference>
<proteinExistence type="inferred from homology"/>
<feature type="chain" id="PRO_0000331965" description="Chaperonin GroEL 2">
    <location>
        <begin position="1"/>
        <end position="547"/>
    </location>
</feature>
<feature type="region of interest" description="Disordered" evidence="2">
    <location>
        <begin position="526"/>
        <end position="547"/>
    </location>
</feature>
<feature type="compositionally biased region" description="Gly residues" evidence="2">
    <location>
        <begin position="533"/>
        <end position="547"/>
    </location>
</feature>
<feature type="binding site" evidence="1">
    <location>
        <begin position="30"/>
        <end position="33"/>
    </location>
    <ligand>
        <name>ATP</name>
        <dbReference type="ChEBI" id="CHEBI:30616"/>
    </ligand>
</feature>
<feature type="binding site" evidence="1">
    <location>
        <position position="51"/>
    </location>
    <ligand>
        <name>ATP</name>
        <dbReference type="ChEBI" id="CHEBI:30616"/>
    </ligand>
</feature>
<feature type="binding site" evidence="1">
    <location>
        <begin position="87"/>
        <end position="91"/>
    </location>
    <ligand>
        <name>ATP</name>
        <dbReference type="ChEBI" id="CHEBI:30616"/>
    </ligand>
</feature>
<feature type="binding site" evidence="1">
    <location>
        <position position="415"/>
    </location>
    <ligand>
        <name>ATP</name>
        <dbReference type="ChEBI" id="CHEBI:30616"/>
    </ligand>
</feature>
<feature type="binding site" evidence="1">
    <location>
        <begin position="479"/>
        <end position="481"/>
    </location>
    <ligand>
        <name>ATP</name>
        <dbReference type="ChEBI" id="CHEBI:30616"/>
    </ligand>
</feature>
<feature type="binding site" evidence="1">
    <location>
        <position position="495"/>
    </location>
    <ligand>
        <name>ATP</name>
        <dbReference type="ChEBI" id="CHEBI:30616"/>
    </ligand>
</feature>
<name>CH602_ANADF</name>
<evidence type="ECO:0000255" key="1">
    <source>
        <dbReference type="HAMAP-Rule" id="MF_00600"/>
    </source>
</evidence>
<evidence type="ECO:0000256" key="2">
    <source>
        <dbReference type="SAM" id="MobiDB-lite"/>
    </source>
</evidence>
<organism>
    <name type="scientific">Anaeromyxobacter sp. (strain Fw109-5)</name>
    <dbReference type="NCBI Taxonomy" id="404589"/>
    <lineage>
        <taxon>Bacteria</taxon>
        <taxon>Pseudomonadati</taxon>
        <taxon>Myxococcota</taxon>
        <taxon>Myxococcia</taxon>
        <taxon>Myxococcales</taxon>
        <taxon>Cystobacterineae</taxon>
        <taxon>Anaeromyxobacteraceae</taxon>
        <taxon>Anaeromyxobacter</taxon>
    </lineage>
</organism>
<keyword id="KW-0067">ATP-binding</keyword>
<keyword id="KW-0143">Chaperone</keyword>
<keyword id="KW-0963">Cytoplasm</keyword>
<keyword id="KW-0413">Isomerase</keyword>
<keyword id="KW-0547">Nucleotide-binding</keyword>
<keyword id="KW-1185">Reference proteome</keyword>